<keyword id="KW-1185">Reference proteome</keyword>
<keyword id="KW-0694">RNA-binding</keyword>
<dbReference type="EMBL" id="X95386">
    <property type="protein sequence ID" value="CAA64672.1"/>
    <property type="molecule type" value="Genomic_DNA"/>
</dbReference>
<dbReference type="EMBL" id="BX640414">
    <property type="protein sequence ID" value="CAE41441.1"/>
    <property type="molecule type" value="Genomic_DNA"/>
</dbReference>
<dbReference type="RefSeq" id="NP_879920.1">
    <property type="nucleotide sequence ID" value="NC_002929.2"/>
</dbReference>
<dbReference type="RefSeq" id="WP_010930212.1">
    <property type="nucleotide sequence ID" value="NZ_CP039022.1"/>
</dbReference>
<dbReference type="SMR" id="Q45388"/>
<dbReference type="STRING" id="257313.BP1144"/>
<dbReference type="PaxDb" id="257313-BP1144"/>
<dbReference type="GeneID" id="69601057"/>
<dbReference type="KEGG" id="bpe:BP1144"/>
<dbReference type="PATRIC" id="fig|257313.5.peg.1228"/>
<dbReference type="eggNOG" id="COG2183">
    <property type="taxonomic scope" value="Bacteria"/>
</dbReference>
<dbReference type="HOGENOM" id="CLU_009833_0_2_4"/>
<dbReference type="Proteomes" id="UP000002676">
    <property type="component" value="Chromosome"/>
</dbReference>
<dbReference type="GO" id="GO:0003729">
    <property type="term" value="F:mRNA binding"/>
    <property type="evidence" value="ECO:0007669"/>
    <property type="project" value="TreeGrafter"/>
</dbReference>
<dbReference type="GO" id="GO:0003735">
    <property type="term" value="F:structural constituent of ribosome"/>
    <property type="evidence" value="ECO:0007669"/>
    <property type="project" value="TreeGrafter"/>
</dbReference>
<dbReference type="GO" id="GO:0006139">
    <property type="term" value="P:nucleobase-containing compound metabolic process"/>
    <property type="evidence" value="ECO:0007669"/>
    <property type="project" value="InterPro"/>
</dbReference>
<dbReference type="GO" id="GO:0006412">
    <property type="term" value="P:translation"/>
    <property type="evidence" value="ECO:0007669"/>
    <property type="project" value="TreeGrafter"/>
</dbReference>
<dbReference type="CDD" id="cd05685">
    <property type="entry name" value="S1_Tex"/>
    <property type="match status" value="1"/>
</dbReference>
<dbReference type="FunFam" id="1.10.150.310:FF:000001">
    <property type="entry name" value="RNA-binding transcriptional accessory protein"/>
    <property type="match status" value="1"/>
</dbReference>
<dbReference type="FunFam" id="2.40.50.140:FF:000051">
    <property type="entry name" value="RNA-binding transcriptional accessory protein"/>
    <property type="match status" value="1"/>
</dbReference>
<dbReference type="FunFam" id="3.30.420.140:FF:000001">
    <property type="entry name" value="RNA-binding transcriptional accessory protein"/>
    <property type="match status" value="1"/>
</dbReference>
<dbReference type="FunFam" id="1.10.10.650:FF:000001">
    <property type="entry name" value="S1 RNA-binding domain 1"/>
    <property type="match status" value="1"/>
</dbReference>
<dbReference type="Gene3D" id="2.40.50.140">
    <property type="entry name" value="Nucleic acid-binding proteins"/>
    <property type="match status" value="1"/>
</dbReference>
<dbReference type="Gene3D" id="1.10.10.650">
    <property type="entry name" value="RuvA domain 2-like"/>
    <property type="match status" value="1"/>
</dbReference>
<dbReference type="Gene3D" id="1.10.3500.10">
    <property type="entry name" value="Tex N-terminal region-like"/>
    <property type="match status" value="1"/>
</dbReference>
<dbReference type="Gene3D" id="1.10.150.310">
    <property type="entry name" value="Tex RuvX-like domain-like"/>
    <property type="match status" value="1"/>
</dbReference>
<dbReference type="Gene3D" id="3.30.420.140">
    <property type="entry name" value="YqgF/RNase H-like domain"/>
    <property type="match status" value="1"/>
</dbReference>
<dbReference type="InterPro" id="IPR041692">
    <property type="entry name" value="HHH_9"/>
</dbReference>
<dbReference type="InterPro" id="IPR012340">
    <property type="entry name" value="NA-bd_OB-fold"/>
</dbReference>
<dbReference type="InterPro" id="IPR050437">
    <property type="entry name" value="Ribos_protein_bS1-like"/>
</dbReference>
<dbReference type="InterPro" id="IPR012337">
    <property type="entry name" value="RNaseH-like_sf"/>
</dbReference>
<dbReference type="InterPro" id="IPR010994">
    <property type="entry name" value="RuvA_2-like"/>
</dbReference>
<dbReference type="InterPro" id="IPR003029">
    <property type="entry name" value="S1_domain"/>
</dbReference>
<dbReference type="InterPro" id="IPR044146">
    <property type="entry name" value="S1_Tex"/>
</dbReference>
<dbReference type="InterPro" id="IPR055179">
    <property type="entry name" value="Tex-like_central_region"/>
</dbReference>
<dbReference type="InterPro" id="IPR023323">
    <property type="entry name" value="Tex-like_dom_sf"/>
</dbReference>
<dbReference type="InterPro" id="IPR023319">
    <property type="entry name" value="Tex-like_HTH_dom_sf"/>
</dbReference>
<dbReference type="InterPro" id="IPR018974">
    <property type="entry name" value="Tex-like_N"/>
</dbReference>
<dbReference type="InterPro" id="IPR032639">
    <property type="entry name" value="Tex_YqgF"/>
</dbReference>
<dbReference type="InterPro" id="IPR006641">
    <property type="entry name" value="YqgF/RNaseH-like_dom"/>
</dbReference>
<dbReference type="InterPro" id="IPR037027">
    <property type="entry name" value="YqgF/RNaseH-like_dom_sf"/>
</dbReference>
<dbReference type="PANTHER" id="PTHR10724">
    <property type="entry name" value="30S RIBOSOMAL PROTEIN S1"/>
    <property type="match status" value="1"/>
</dbReference>
<dbReference type="PANTHER" id="PTHR10724:SF10">
    <property type="entry name" value="S1 RNA-BINDING DOMAIN-CONTAINING PROTEIN 1"/>
    <property type="match status" value="1"/>
</dbReference>
<dbReference type="Pfam" id="PF12836">
    <property type="entry name" value="HHH_3"/>
    <property type="match status" value="1"/>
</dbReference>
<dbReference type="Pfam" id="PF17674">
    <property type="entry name" value="HHH_9"/>
    <property type="match status" value="1"/>
</dbReference>
<dbReference type="Pfam" id="PF00575">
    <property type="entry name" value="S1"/>
    <property type="match status" value="1"/>
</dbReference>
<dbReference type="Pfam" id="PF22706">
    <property type="entry name" value="Tex_central_region"/>
    <property type="match status" value="1"/>
</dbReference>
<dbReference type="Pfam" id="PF09371">
    <property type="entry name" value="Tex_N"/>
    <property type="match status" value="1"/>
</dbReference>
<dbReference type="Pfam" id="PF16921">
    <property type="entry name" value="Tex_YqgF"/>
    <property type="match status" value="1"/>
</dbReference>
<dbReference type="SMART" id="SM00316">
    <property type="entry name" value="S1"/>
    <property type="match status" value="1"/>
</dbReference>
<dbReference type="SMART" id="SM00732">
    <property type="entry name" value="YqgFc"/>
    <property type="match status" value="1"/>
</dbReference>
<dbReference type="SUPFAM" id="SSF50249">
    <property type="entry name" value="Nucleic acid-binding proteins"/>
    <property type="match status" value="1"/>
</dbReference>
<dbReference type="SUPFAM" id="SSF53098">
    <property type="entry name" value="Ribonuclease H-like"/>
    <property type="match status" value="1"/>
</dbReference>
<dbReference type="SUPFAM" id="SSF47781">
    <property type="entry name" value="RuvA domain 2-like"/>
    <property type="match status" value="2"/>
</dbReference>
<dbReference type="SUPFAM" id="SSF158832">
    <property type="entry name" value="Tex N-terminal region-like"/>
    <property type="match status" value="1"/>
</dbReference>
<dbReference type="PROSITE" id="PS50126">
    <property type="entry name" value="S1"/>
    <property type="match status" value="1"/>
</dbReference>
<name>TEX_BORPE</name>
<proteinExistence type="predicted"/>
<gene>
    <name type="primary">tex</name>
    <name type="ordered locus">BP1144</name>
</gene>
<sequence>MPETSATTNAAPGVDHARIIAQLATEIGARASQVASAVELLDDGATVPFIARYRKEATGGLDDGALRTLEVRLGYLRELEERRGAILESITQQGKLTPELQQEIATAETKQRLEDLYAPYKPKRRTRAQIAREAGLEPLADAILADPACDPAALAAQYLNPEASINDAKAALDGARDILAERHAENADLLADIREHLWSTGLLYSKMVEGKETDGANFRDWFDFNEPLRTLPSHRILALMRGRQQGVLELRVGLEADLEAETPHPCVVRIASFLKLGNGLFALDATPRARWLGEVCRWTWRVKLLTAFESELFGRLRESAEAEAIRVFAANLKDLLLAAPAGPKTVLGLDPGIRTGCKVAVIDRTGKVVDTATVYPFEPRRDREGTIKTLAALAARHKVELIAIGNGTASRESEKLVGDMMARFPDLALTRVVVSEAGASVYSASETAALEFPDLDVTLRGAVSIARRLQDPLAELVKIDPKAIGVGQYQHDVNQRELARSLDAVVEDCVNAVGVDVNTASAALLARVSGLNTLLAKNIVAWRDENGAFPTRDMLRKVPRFGEKAFEQAAGFLRIPNGDNPLDASAVHPEAYPVVERIVARIKADVRHIIGQREALKGVSPSDFTDERFGLPTVRDIFAELEKPGRDPRPEFKTAQFKEGVETLNDLFPGMVLEGVVTNVANFGAFVDIGVHQDGLVHISALAEKFVKDPRDVVRVGQTVTVKVLEVDVARKRVALTMRLNDAAEPARRGNGAGAGAARGADRGARRPQADNGKGAPANSAMADAFAKLKR</sequence>
<comment type="function">
    <text>Transcription accessory protein. Exact function not known.</text>
</comment>
<evidence type="ECO:0000255" key="1">
    <source>
        <dbReference type="PROSITE-ProRule" id="PRU00180"/>
    </source>
</evidence>
<evidence type="ECO:0000256" key="2">
    <source>
        <dbReference type="SAM" id="MobiDB-lite"/>
    </source>
</evidence>
<evidence type="ECO:0000305" key="3"/>
<feature type="chain" id="PRO_0000215103" description="Protein tex">
    <location>
        <begin position="1"/>
        <end position="791"/>
    </location>
</feature>
<feature type="domain" description="S1 motif" evidence="1">
    <location>
        <begin position="670"/>
        <end position="739"/>
    </location>
</feature>
<feature type="region of interest" description="Disordered" evidence="2">
    <location>
        <begin position="746"/>
        <end position="791"/>
    </location>
</feature>
<feature type="compositionally biased region" description="Basic and acidic residues" evidence="2">
    <location>
        <begin position="760"/>
        <end position="769"/>
    </location>
</feature>
<feature type="sequence conflict" description="In Ref. 1; CAA64672." evidence="3" ref="1">
    <original>REALK</original>
    <variation>ARRSQ</variation>
    <location>
        <begin position="613"/>
        <end position="617"/>
    </location>
</feature>
<protein>
    <recommendedName>
        <fullName>Protein tex</fullName>
    </recommendedName>
</protein>
<reference key="1">
    <citation type="journal article" date="1996" name="J. Bacteriol.">
        <title>A new gene locus of Bordetella pertussis defines a novel family of prokaryotic transcriptional accessory proteins.</title>
        <authorList>
            <person name="Fuchs T.M."/>
            <person name="Deppisch H."/>
            <person name="Scarlato V."/>
            <person name="Gross R."/>
        </authorList>
    </citation>
    <scope>NUCLEOTIDE SEQUENCE [GENOMIC DNA]</scope>
    <source>
        <strain>Tohama I / ATCC BAA-589 / NCTC 13251</strain>
    </source>
</reference>
<reference key="2">
    <citation type="journal article" date="2003" name="Nat. Genet.">
        <title>Comparative analysis of the genome sequences of Bordetella pertussis, Bordetella parapertussis and Bordetella bronchiseptica.</title>
        <authorList>
            <person name="Parkhill J."/>
            <person name="Sebaihia M."/>
            <person name="Preston A."/>
            <person name="Murphy L.D."/>
            <person name="Thomson N.R."/>
            <person name="Harris D.E."/>
            <person name="Holden M.T.G."/>
            <person name="Churcher C.M."/>
            <person name="Bentley S.D."/>
            <person name="Mungall K.L."/>
            <person name="Cerdeno-Tarraga A.-M."/>
            <person name="Temple L."/>
            <person name="James K.D."/>
            <person name="Harris B."/>
            <person name="Quail M.A."/>
            <person name="Achtman M."/>
            <person name="Atkin R."/>
            <person name="Baker S."/>
            <person name="Basham D."/>
            <person name="Bason N."/>
            <person name="Cherevach I."/>
            <person name="Chillingworth T."/>
            <person name="Collins M."/>
            <person name="Cronin A."/>
            <person name="Davis P."/>
            <person name="Doggett J."/>
            <person name="Feltwell T."/>
            <person name="Goble A."/>
            <person name="Hamlin N."/>
            <person name="Hauser H."/>
            <person name="Holroyd S."/>
            <person name="Jagels K."/>
            <person name="Leather S."/>
            <person name="Moule S."/>
            <person name="Norberczak H."/>
            <person name="O'Neil S."/>
            <person name="Ormond D."/>
            <person name="Price C."/>
            <person name="Rabbinowitsch E."/>
            <person name="Rutter S."/>
            <person name="Sanders M."/>
            <person name="Saunders D."/>
            <person name="Seeger K."/>
            <person name="Sharp S."/>
            <person name="Simmonds M."/>
            <person name="Skelton J."/>
            <person name="Squares R."/>
            <person name="Squares S."/>
            <person name="Stevens K."/>
            <person name="Unwin L."/>
            <person name="Whitehead S."/>
            <person name="Barrell B.G."/>
            <person name="Maskell D.J."/>
        </authorList>
    </citation>
    <scope>NUCLEOTIDE SEQUENCE [LARGE SCALE GENOMIC DNA]</scope>
    <source>
        <strain>Tohama I / ATCC BAA-589 / NCTC 13251</strain>
    </source>
</reference>
<accession>Q45388</accession>
<organism>
    <name type="scientific">Bordetella pertussis (strain Tohama I / ATCC BAA-589 / NCTC 13251)</name>
    <dbReference type="NCBI Taxonomy" id="257313"/>
    <lineage>
        <taxon>Bacteria</taxon>
        <taxon>Pseudomonadati</taxon>
        <taxon>Pseudomonadota</taxon>
        <taxon>Betaproteobacteria</taxon>
        <taxon>Burkholderiales</taxon>
        <taxon>Alcaligenaceae</taxon>
        <taxon>Bordetella</taxon>
    </lineage>
</organism>